<proteinExistence type="inferred from homology"/>
<sequence>MATYLIGDVHGCYDELIALLQQVEFMPDTDTLWLTGDLVARGPGSLDVLRYVKSLGNSVRLVLGNHDLHLLAVFAGISRNKPKDRLTPLLEAPDADELLNWLRRQPLLQVDEEKKLVMAHAGITPQWDLQTAKECARDVEAVLSSDSYPFFLDAMYGDMPNNWSPELSGLARLRFITNAFTRMRYCFPNGQLDMYSKASPENAPAPLKPWFAIPGPVSEAYSIAFGHWASLEGKGTPEGIYALDTGCCWGGELTCLRWEDKQYFVQPSNRQMDMGEGEAVNA</sequence>
<keyword id="KW-0378">Hydrolase</keyword>
<comment type="function">
    <text evidence="1">Hydrolyzes diadenosine 5',5'''-P1,P4-tetraphosphate to yield ADP.</text>
</comment>
<comment type="catalytic activity">
    <reaction evidence="1">
        <text>P(1),P(4)-bis(5'-adenosyl) tetraphosphate + H2O = 2 ADP + 2 H(+)</text>
        <dbReference type="Rhea" id="RHEA:24252"/>
        <dbReference type="ChEBI" id="CHEBI:15377"/>
        <dbReference type="ChEBI" id="CHEBI:15378"/>
        <dbReference type="ChEBI" id="CHEBI:58141"/>
        <dbReference type="ChEBI" id="CHEBI:456216"/>
        <dbReference type="EC" id="3.6.1.41"/>
    </reaction>
</comment>
<comment type="similarity">
    <text evidence="1">Belongs to the Ap4A hydrolase family.</text>
</comment>
<dbReference type="EC" id="3.6.1.41" evidence="1"/>
<dbReference type="EMBL" id="FM200053">
    <property type="protein sequence ID" value="CAR58196.1"/>
    <property type="molecule type" value="Genomic_DNA"/>
</dbReference>
<dbReference type="RefSeq" id="WP_000257207.1">
    <property type="nucleotide sequence ID" value="NC_011147.1"/>
</dbReference>
<dbReference type="SMR" id="B5BL25"/>
<dbReference type="KEGG" id="sek:SSPA0085"/>
<dbReference type="HOGENOM" id="CLU_056184_2_0_6"/>
<dbReference type="Proteomes" id="UP000001869">
    <property type="component" value="Chromosome"/>
</dbReference>
<dbReference type="GO" id="GO:0008803">
    <property type="term" value="F:bis(5'-nucleosyl)-tetraphosphatase (symmetrical) activity"/>
    <property type="evidence" value="ECO:0007669"/>
    <property type="project" value="UniProtKB-UniRule"/>
</dbReference>
<dbReference type="CDD" id="cd07422">
    <property type="entry name" value="MPP_ApaH"/>
    <property type="match status" value="1"/>
</dbReference>
<dbReference type="FunFam" id="3.60.21.10:FF:000013">
    <property type="entry name" value="Bis(5'-nucleosyl)-tetraphosphatase, symmetrical"/>
    <property type="match status" value="1"/>
</dbReference>
<dbReference type="Gene3D" id="3.60.21.10">
    <property type="match status" value="1"/>
</dbReference>
<dbReference type="HAMAP" id="MF_00199">
    <property type="entry name" value="ApaH"/>
    <property type="match status" value="1"/>
</dbReference>
<dbReference type="InterPro" id="IPR004617">
    <property type="entry name" value="ApaH"/>
</dbReference>
<dbReference type="InterPro" id="IPR004843">
    <property type="entry name" value="Calcineurin-like_PHP_ApaH"/>
</dbReference>
<dbReference type="InterPro" id="IPR029052">
    <property type="entry name" value="Metallo-depent_PP-like"/>
</dbReference>
<dbReference type="NCBIfam" id="TIGR00668">
    <property type="entry name" value="apaH"/>
    <property type="match status" value="1"/>
</dbReference>
<dbReference type="NCBIfam" id="NF001204">
    <property type="entry name" value="PRK00166.1"/>
    <property type="match status" value="1"/>
</dbReference>
<dbReference type="PANTHER" id="PTHR40942">
    <property type="match status" value="1"/>
</dbReference>
<dbReference type="PANTHER" id="PTHR40942:SF4">
    <property type="entry name" value="CYTOCHROME C5"/>
    <property type="match status" value="1"/>
</dbReference>
<dbReference type="Pfam" id="PF00149">
    <property type="entry name" value="Metallophos"/>
    <property type="match status" value="1"/>
</dbReference>
<dbReference type="PIRSF" id="PIRSF000903">
    <property type="entry name" value="B5n-ttraPtase_sm"/>
    <property type="match status" value="1"/>
</dbReference>
<dbReference type="SUPFAM" id="SSF56300">
    <property type="entry name" value="Metallo-dependent phosphatases"/>
    <property type="match status" value="1"/>
</dbReference>
<evidence type="ECO:0000255" key="1">
    <source>
        <dbReference type="HAMAP-Rule" id="MF_00199"/>
    </source>
</evidence>
<organism>
    <name type="scientific">Salmonella paratyphi A (strain AKU_12601)</name>
    <dbReference type="NCBI Taxonomy" id="554290"/>
    <lineage>
        <taxon>Bacteria</taxon>
        <taxon>Pseudomonadati</taxon>
        <taxon>Pseudomonadota</taxon>
        <taxon>Gammaproteobacteria</taxon>
        <taxon>Enterobacterales</taxon>
        <taxon>Enterobacteriaceae</taxon>
        <taxon>Salmonella</taxon>
    </lineage>
</organism>
<name>APAH_SALPK</name>
<gene>
    <name evidence="1" type="primary">apaH</name>
    <name type="ordered locus">SSPA0085</name>
</gene>
<reference key="1">
    <citation type="journal article" date="2009" name="BMC Genomics">
        <title>Pseudogene accumulation in the evolutionary histories of Salmonella enterica serovars Paratyphi A and Typhi.</title>
        <authorList>
            <person name="Holt K.E."/>
            <person name="Thomson N.R."/>
            <person name="Wain J."/>
            <person name="Langridge G.C."/>
            <person name="Hasan R."/>
            <person name="Bhutta Z.A."/>
            <person name="Quail M.A."/>
            <person name="Norbertczak H."/>
            <person name="Walker D."/>
            <person name="Simmonds M."/>
            <person name="White B."/>
            <person name="Bason N."/>
            <person name="Mungall K."/>
            <person name="Dougan G."/>
            <person name="Parkhill J."/>
        </authorList>
    </citation>
    <scope>NUCLEOTIDE SEQUENCE [LARGE SCALE GENOMIC DNA]</scope>
    <source>
        <strain>AKU_12601</strain>
    </source>
</reference>
<protein>
    <recommendedName>
        <fullName evidence="1">Bis(5'-nucleosyl)-tetraphosphatase, symmetrical</fullName>
        <ecNumber evidence="1">3.6.1.41</ecNumber>
    </recommendedName>
    <alternativeName>
        <fullName evidence="1">Ap4A hydrolase</fullName>
    </alternativeName>
    <alternativeName>
        <fullName evidence="1">Diadenosine 5',5'''-P1,P4-tetraphosphate pyrophosphohydrolase</fullName>
    </alternativeName>
    <alternativeName>
        <fullName evidence="1">Diadenosine tetraphosphatase</fullName>
    </alternativeName>
</protein>
<feature type="chain" id="PRO_1000099336" description="Bis(5'-nucleosyl)-tetraphosphatase, symmetrical">
    <location>
        <begin position="1"/>
        <end position="282"/>
    </location>
</feature>
<accession>B5BL25</accession>